<accession>P49743</accession>
<dbReference type="EMBL" id="M81766">
    <property type="protein sequence ID" value="AAA42025.1"/>
    <property type="status" value="ALT_INIT"/>
    <property type="molecule type" value="mRNA"/>
</dbReference>
<dbReference type="PIR" id="A41651">
    <property type="entry name" value="A41651"/>
</dbReference>
<dbReference type="SMR" id="P49743"/>
<dbReference type="CORUM" id="P49743"/>
<dbReference type="FunCoup" id="P49743">
    <property type="interactions" value="2716"/>
</dbReference>
<dbReference type="STRING" id="10116.ENSRNOP00000040499"/>
<dbReference type="BindingDB" id="P49743"/>
<dbReference type="ChEMBL" id="CHEMBL2805"/>
<dbReference type="PhosphoSitePlus" id="P49743"/>
<dbReference type="PaxDb" id="10116-ENSRNOP00000040499"/>
<dbReference type="PeptideAtlas" id="P49743"/>
<dbReference type="UCSC" id="RGD:3611">
    <property type="organism name" value="rat"/>
</dbReference>
<dbReference type="AGR" id="RGD:3611"/>
<dbReference type="RGD" id="3611">
    <property type="gene designation" value="Rxrb"/>
</dbReference>
<dbReference type="eggNOG" id="KOG3575">
    <property type="taxonomic scope" value="Eukaryota"/>
</dbReference>
<dbReference type="InParanoid" id="P49743"/>
<dbReference type="PhylomeDB" id="P49743"/>
<dbReference type="Reactome" id="R-RNO-383280">
    <property type="pathway name" value="Nuclear Receptor transcription pathway"/>
</dbReference>
<dbReference type="Reactome" id="R-RNO-5362517">
    <property type="pathway name" value="Signaling by Retinoic Acid"/>
</dbReference>
<dbReference type="Reactome" id="R-RNO-9029569">
    <property type="pathway name" value="NR1H3 &amp; NR1H2 regulate gene expression linked to cholesterol transport and efflux"/>
</dbReference>
<dbReference type="Reactome" id="R-RNO-9623433">
    <property type="pathway name" value="NR1H2 &amp; NR1H3 regulate gene expression to control bile acid homeostasis"/>
</dbReference>
<dbReference type="Proteomes" id="UP000002494">
    <property type="component" value="Unplaced"/>
</dbReference>
<dbReference type="GO" id="GO:0005737">
    <property type="term" value="C:cytoplasm"/>
    <property type="evidence" value="ECO:0007669"/>
    <property type="project" value="UniProtKB-SubCell"/>
</dbReference>
<dbReference type="GO" id="GO:0005634">
    <property type="term" value="C:nucleus"/>
    <property type="evidence" value="ECO:0000266"/>
    <property type="project" value="RGD"/>
</dbReference>
<dbReference type="GO" id="GO:0090575">
    <property type="term" value="C:RNA polymerase II transcription regulator complex"/>
    <property type="evidence" value="ECO:0000266"/>
    <property type="project" value="RGD"/>
</dbReference>
<dbReference type="GO" id="GO:0031490">
    <property type="term" value="F:chromatin DNA binding"/>
    <property type="evidence" value="ECO:0000266"/>
    <property type="project" value="RGD"/>
</dbReference>
<dbReference type="GO" id="GO:0001228">
    <property type="term" value="F:DNA-binding transcription activator activity, RNA polymerase II-specific"/>
    <property type="evidence" value="ECO:0000266"/>
    <property type="project" value="RGD"/>
</dbReference>
<dbReference type="GO" id="GO:0004879">
    <property type="term" value="F:nuclear receptor activity"/>
    <property type="evidence" value="ECO:0000314"/>
    <property type="project" value="RGD"/>
</dbReference>
<dbReference type="GO" id="GO:0042974">
    <property type="term" value="F:nuclear retinoic acid receptor binding"/>
    <property type="evidence" value="ECO:0000314"/>
    <property type="project" value="RGD"/>
</dbReference>
<dbReference type="GO" id="GO:0003707">
    <property type="term" value="F:nuclear steroid receptor activity"/>
    <property type="evidence" value="ECO:0007669"/>
    <property type="project" value="InterPro"/>
</dbReference>
<dbReference type="GO" id="GO:0046966">
    <property type="term" value="F:nuclear thyroid hormone receptor binding"/>
    <property type="evidence" value="ECO:0000314"/>
    <property type="project" value="RGD"/>
</dbReference>
<dbReference type="GO" id="GO:0042809">
    <property type="term" value="F:nuclear vitamin D receptor binding"/>
    <property type="evidence" value="ECO:0000314"/>
    <property type="project" value="RGD"/>
</dbReference>
<dbReference type="GO" id="GO:0044877">
    <property type="term" value="F:protein-containing complex binding"/>
    <property type="evidence" value="ECO:0000314"/>
    <property type="project" value="RGD"/>
</dbReference>
<dbReference type="GO" id="GO:0044323">
    <property type="term" value="F:retinoic acid-responsive element binding"/>
    <property type="evidence" value="ECO:0000318"/>
    <property type="project" value="GO_Central"/>
</dbReference>
<dbReference type="GO" id="GO:0000977">
    <property type="term" value="F:RNA polymerase II transcription regulatory region sequence-specific DNA binding"/>
    <property type="evidence" value="ECO:0000266"/>
    <property type="project" value="RGD"/>
</dbReference>
<dbReference type="GO" id="GO:0043565">
    <property type="term" value="F:sequence-specific DNA binding"/>
    <property type="evidence" value="ECO:0000266"/>
    <property type="project" value="RGD"/>
</dbReference>
<dbReference type="GO" id="GO:1990837">
    <property type="term" value="F:sequence-specific double-stranded DNA binding"/>
    <property type="evidence" value="ECO:0000266"/>
    <property type="project" value="RGD"/>
</dbReference>
<dbReference type="GO" id="GO:0000976">
    <property type="term" value="F:transcription cis-regulatory region binding"/>
    <property type="evidence" value="ECO:0000266"/>
    <property type="project" value="RGD"/>
</dbReference>
<dbReference type="GO" id="GO:0008270">
    <property type="term" value="F:zinc ion binding"/>
    <property type="evidence" value="ECO:0007669"/>
    <property type="project" value="UniProtKB-KW"/>
</dbReference>
<dbReference type="GO" id="GO:0060038">
    <property type="term" value="P:cardiac muscle cell proliferation"/>
    <property type="evidence" value="ECO:0000266"/>
    <property type="project" value="RGD"/>
</dbReference>
<dbReference type="GO" id="GO:0030154">
    <property type="term" value="P:cell differentiation"/>
    <property type="evidence" value="ECO:0000318"/>
    <property type="project" value="GO_Central"/>
</dbReference>
<dbReference type="GO" id="GO:0071300">
    <property type="term" value="P:cellular response to retinoic acid"/>
    <property type="evidence" value="ECO:0000266"/>
    <property type="project" value="RGD"/>
</dbReference>
<dbReference type="GO" id="GO:0001701">
    <property type="term" value="P:in utero embryonic development"/>
    <property type="evidence" value="ECO:0000266"/>
    <property type="project" value="RGD"/>
</dbReference>
<dbReference type="GO" id="GO:0001893">
    <property type="term" value="P:maternal placenta development"/>
    <property type="evidence" value="ECO:0000266"/>
    <property type="project" value="RGD"/>
</dbReference>
<dbReference type="GO" id="GO:0007399">
    <property type="term" value="P:nervous system development"/>
    <property type="evidence" value="ECO:0000318"/>
    <property type="project" value="GO_Central"/>
</dbReference>
<dbReference type="GO" id="GO:0141193">
    <property type="term" value="P:nuclear receptor-mediated signaling pathway"/>
    <property type="evidence" value="ECO:0000314"/>
    <property type="project" value="RGD"/>
</dbReference>
<dbReference type="GO" id="GO:0045893">
    <property type="term" value="P:positive regulation of DNA-templated transcription"/>
    <property type="evidence" value="ECO:0000266"/>
    <property type="project" value="RGD"/>
</dbReference>
<dbReference type="GO" id="GO:0045944">
    <property type="term" value="P:positive regulation of transcription by RNA polymerase II"/>
    <property type="evidence" value="ECO:0000266"/>
    <property type="project" value="RGD"/>
</dbReference>
<dbReference type="GO" id="GO:0031641">
    <property type="term" value="P:regulation of myelination"/>
    <property type="evidence" value="ECO:0000314"/>
    <property type="project" value="RGD"/>
</dbReference>
<dbReference type="GO" id="GO:0048384">
    <property type="term" value="P:retinoic acid receptor signaling pathway"/>
    <property type="evidence" value="ECO:0000318"/>
    <property type="project" value="GO_Central"/>
</dbReference>
<dbReference type="GO" id="GO:0055012">
    <property type="term" value="P:ventricular cardiac muscle cell differentiation"/>
    <property type="evidence" value="ECO:0000266"/>
    <property type="project" value="RGD"/>
</dbReference>
<dbReference type="CDD" id="cd06956">
    <property type="entry name" value="NR_DBD_RXR"/>
    <property type="match status" value="1"/>
</dbReference>
<dbReference type="CDD" id="cd06943">
    <property type="entry name" value="NR_LBD_RXR_like"/>
    <property type="match status" value="1"/>
</dbReference>
<dbReference type="FunFam" id="1.10.565.10:FF:000002">
    <property type="entry name" value="Retinoic acid receptor RXR-alpha"/>
    <property type="match status" value="1"/>
</dbReference>
<dbReference type="FunFam" id="3.30.50.10:FF:000005">
    <property type="entry name" value="Retinoic acid receptor RXR-alpha"/>
    <property type="match status" value="1"/>
</dbReference>
<dbReference type="Gene3D" id="3.30.50.10">
    <property type="entry name" value="Erythroid Transcription Factor GATA-1, subunit A"/>
    <property type="match status" value="1"/>
</dbReference>
<dbReference type="Gene3D" id="1.10.565.10">
    <property type="entry name" value="Retinoid X Receptor"/>
    <property type="match status" value="1"/>
</dbReference>
<dbReference type="InterPro" id="IPR035500">
    <property type="entry name" value="NHR-like_dom_sf"/>
</dbReference>
<dbReference type="InterPro" id="IPR000536">
    <property type="entry name" value="Nucl_hrmn_rcpt_lig-bd"/>
</dbReference>
<dbReference type="InterPro" id="IPR050274">
    <property type="entry name" value="Nuclear_hormone_rcpt_NR2"/>
</dbReference>
<dbReference type="InterPro" id="IPR001723">
    <property type="entry name" value="Nuclear_hrmn_rcpt"/>
</dbReference>
<dbReference type="InterPro" id="IPR000003">
    <property type="entry name" value="Retinoid-X_rcpt/HNF4"/>
</dbReference>
<dbReference type="InterPro" id="IPR001628">
    <property type="entry name" value="Znf_hrmn_rcpt"/>
</dbReference>
<dbReference type="InterPro" id="IPR013088">
    <property type="entry name" value="Znf_NHR/GATA"/>
</dbReference>
<dbReference type="PANTHER" id="PTHR24083">
    <property type="entry name" value="NUCLEAR HORMONE RECEPTOR"/>
    <property type="match status" value="1"/>
</dbReference>
<dbReference type="Pfam" id="PF00104">
    <property type="entry name" value="Hormone_recep"/>
    <property type="match status" value="1"/>
</dbReference>
<dbReference type="Pfam" id="PF00105">
    <property type="entry name" value="zf-C4"/>
    <property type="match status" value="1"/>
</dbReference>
<dbReference type="PRINTS" id="PR00545">
    <property type="entry name" value="RETINOIDXR"/>
</dbReference>
<dbReference type="PRINTS" id="PR00398">
    <property type="entry name" value="STRDHORMONER"/>
</dbReference>
<dbReference type="PRINTS" id="PR00047">
    <property type="entry name" value="STROIDFINGER"/>
</dbReference>
<dbReference type="SMART" id="SM00430">
    <property type="entry name" value="HOLI"/>
    <property type="match status" value="1"/>
</dbReference>
<dbReference type="SMART" id="SM00399">
    <property type="entry name" value="ZnF_C4"/>
    <property type="match status" value="1"/>
</dbReference>
<dbReference type="SUPFAM" id="SSF57716">
    <property type="entry name" value="Glucocorticoid receptor-like (DNA-binding domain)"/>
    <property type="match status" value="1"/>
</dbReference>
<dbReference type="SUPFAM" id="SSF48508">
    <property type="entry name" value="Nuclear receptor ligand-binding domain"/>
    <property type="match status" value="1"/>
</dbReference>
<dbReference type="PROSITE" id="PS51843">
    <property type="entry name" value="NR_LBD"/>
    <property type="match status" value="1"/>
</dbReference>
<dbReference type="PROSITE" id="PS00031">
    <property type="entry name" value="NUCLEAR_REC_DBD_1"/>
    <property type="match status" value="1"/>
</dbReference>
<dbReference type="PROSITE" id="PS51030">
    <property type="entry name" value="NUCLEAR_REC_DBD_2"/>
    <property type="match status" value="1"/>
</dbReference>
<gene>
    <name type="primary">Rxrb</name>
    <name type="synonym">Nr2b2</name>
    <name type="synonym">Rcor-1</name>
</gene>
<protein>
    <recommendedName>
        <fullName>Retinoic acid receptor RXR-beta</fullName>
    </recommendedName>
    <alternativeName>
        <fullName>Nuclear receptor coregulator 1</fullName>
    </alternativeName>
    <alternativeName>
        <fullName>Nuclear receptor subfamily 2 group B member 2</fullName>
    </alternativeName>
    <alternativeName>
        <fullName>Retinoid X receptor beta</fullName>
    </alternativeName>
</protein>
<proteinExistence type="evidence at protein level"/>
<organism>
    <name type="scientific">Rattus norvegicus</name>
    <name type="common">Rat</name>
    <dbReference type="NCBI Taxonomy" id="10116"/>
    <lineage>
        <taxon>Eukaryota</taxon>
        <taxon>Metazoa</taxon>
        <taxon>Chordata</taxon>
        <taxon>Craniata</taxon>
        <taxon>Vertebrata</taxon>
        <taxon>Euteleostomi</taxon>
        <taxon>Mammalia</taxon>
        <taxon>Eutheria</taxon>
        <taxon>Euarchontoglires</taxon>
        <taxon>Glires</taxon>
        <taxon>Rodentia</taxon>
        <taxon>Myomorpha</taxon>
        <taxon>Muroidea</taxon>
        <taxon>Muridae</taxon>
        <taxon>Murinae</taxon>
        <taxon>Rattus</taxon>
    </lineage>
</organism>
<comment type="function">
    <text evidence="7">Receptor for retinoic acid. Retinoic acid receptors bind as heterodimers to their target response elements in response to their ligands, all-trans or 9-cis retinoic acid, and regulate gene expression in various biological processes. The RAR/RXR heterodimers bind to the retinoic acid response elements (RARE).</text>
</comment>
<comment type="subunit">
    <text evidence="2 3 7">Homodimer (in vitro) (By similarity). Heterodimer with other retinoic acid receptor family members. Binds DNA preferentially as a RAR/RXR heterodimer (PubMed:1662118). Interacts with NR1H3 (By similarity). Interacts with AKAP13 (By similarity).</text>
</comment>
<comment type="subcellular location">
    <subcellularLocation>
        <location evidence="8">Nucleus</location>
    </subcellularLocation>
    <subcellularLocation>
        <location evidence="8">Cytoplasm</location>
    </subcellularLocation>
</comment>
<comment type="tissue specificity">
    <text evidence="8">Expressed in the adrenal gland with main expression in the zona fasciculata (at protein level).</text>
</comment>
<comment type="domain">
    <text evidence="9">Composed of three domains: a modulating N-terminal domain, a DNA-binding domain and a C-terminal ligand-binding domain.</text>
</comment>
<comment type="similarity">
    <text evidence="9">Belongs to the nuclear hormone receptor family. NR2 subfamily.</text>
</comment>
<comment type="sequence caution" evidence="9">
    <conflict type="erroneous initiation">
        <sequence resource="EMBL-CDS" id="AAA42025"/>
    </conflict>
</comment>
<sequence>GEAGRDGMGDTGRDSRSPDSSSPNPLSQGIPPSSPPGPPHTPSAPPPPMPPPPLGSPFPVISSSMGSPGLPPPAPPGFSGPVSSPQINSTVSLPGGGSGPPEDVKPPVLGVRGLHCPPPPGGPGAGKRLCAICGDRSSGKHYGVYSCEGCKGFFKRTIRKDLTYSCRDNKDCTVDKRQRNRCQYCRYQKCLATGMKREAVQEERQRGKDKDGDGDGAGGAPEEMPVDRILEAELAVEQKSDQGVEGPGATGGGGSSPNDPVTNICQAADKQLFTLVEWAKRIPHFSSLPLDDQVILLRAGWNELLIASFSHRSIDVRDGILLATGLHVHRNSAHSAGVGAIFDRVLTELVSKMRDMRMDKTELGCLRAIILFNPDAKGLSNPGEVEILREKVYASLETYCKQKYPEQQGRFAKLLLRLPALRSIGLKCLEHLFFFKLIGDTPIDTFLMEMLEAPHQLA</sequence>
<keyword id="KW-0963">Cytoplasm</keyword>
<keyword id="KW-0238">DNA-binding</keyword>
<keyword id="KW-0479">Metal-binding</keyword>
<keyword id="KW-0539">Nucleus</keyword>
<keyword id="KW-0675">Receptor</keyword>
<keyword id="KW-1185">Reference proteome</keyword>
<keyword id="KW-0804">Transcription</keyword>
<keyword id="KW-0805">Transcription regulation</keyword>
<keyword id="KW-0862">Zinc</keyword>
<keyword id="KW-0863">Zinc-finger</keyword>
<feature type="chain" id="PRO_0000053574" description="Retinoic acid receptor RXR-beta">
    <location>
        <begin position="1" status="less than"/>
        <end position="458"/>
    </location>
</feature>
<feature type="domain" description="NR LBD" evidence="5">
    <location>
        <begin position="221"/>
        <end position="454"/>
    </location>
</feature>
<feature type="DNA-binding region" description="Nuclear receptor" evidence="4">
    <location>
        <begin position="130"/>
        <end position="195"/>
    </location>
</feature>
<feature type="zinc finger region" description="NR C4-type" evidence="4">
    <location>
        <begin position="130"/>
        <end position="150"/>
    </location>
</feature>
<feature type="zinc finger region" description="NR C4-type" evidence="4">
    <location>
        <begin position="166"/>
        <end position="190"/>
    </location>
</feature>
<feature type="region of interest" description="Modulating" evidence="1">
    <location>
        <begin position="1" status="less than"/>
        <end position="129"/>
    </location>
</feature>
<feature type="region of interest" description="Disordered" evidence="6">
    <location>
        <begin position="1"/>
        <end position="105"/>
    </location>
</feature>
<feature type="region of interest" description="Hinge">
    <location>
        <begin position="196"/>
        <end position="220"/>
    </location>
</feature>
<feature type="region of interest" description="Disordered" evidence="6">
    <location>
        <begin position="201"/>
        <end position="223"/>
    </location>
</feature>
<feature type="region of interest" description="Disordered" evidence="6">
    <location>
        <begin position="238"/>
        <end position="261"/>
    </location>
</feature>
<feature type="compositionally biased region" description="Basic and acidic residues" evidence="6">
    <location>
        <begin position="1"/>
        <end position="17"/>
    </location>
</feature>
<feature type="compositionally biased region" description="Low complexity" evidence="6">
    <location>
        <begin position="18"/>
        <end position="31"/>
    </location>
</feature>
<feature type="compositionally biased region" description="Pro residues" evidence="6">
    <location>
        <begin position="32"/>
        <end position="56"/>
    </location>
</feature>
<feature type="compositionally biased region" description="Low complexity" evidence="6">
    <location>
        <begin position="57"/>
        <end position="68"/>
    </location>
</feature>
<feature type="compositionally biased region" description="Pro residues" evidence="6">
    <location>
        <begin position="69"/>
        <end position="78"/>
    </location>
</feature>
<feature type="compositionally biased region" description="Basic and acidic residues" evidence="6">
    <location>
        <begin position="201"/>
        <end position="213"/>
    </location>
</feature>
<feature type="compositionally biased region" description="Gly residues" evidence="6">
    <location>
        <begin position="245"/>
        <end position="255"/>
    </location>
</feature>
<feature type="non-terminal residue">
    <location>
        <position position="1"/>
    </location>
</feature>
<reference key="1">
    <citation type="journal article" date="1991" name="Cell">
        <title>RXR beta: a coregulator that enhances binding of retinoic acid, thyroid hormone, and vitamin D receptors to their cognate response elements.</title>
        <authorList>
            <person name="Yu V.C."/>
            <person name="Delsert C."/>
            <person name="Andersen B."/>
            <person name="Holloway J.M."/>
            <person name="Devary O.V."/>
            <person name="Naeaer A.M."/>
            <person name="Kim S.Y."/>
            <person name="Boutin J.-M."/>
            <person name="Glass C.K."/>
            <person name="Roesenfeld M.G."/>
        </authorList>
    </citation>
    <scope>NUCLEOTIDE SEQUENCE [MRNA]</scope>
    <scope>FUNCTION</scope>
    <scope>SUBUNIT</scope>
    <source>
        <tissue>Thyroid</tissue>
    </source>
</reference>
<reference key="2">
    <citation type="journal article" date="2017" name="J. Steroid Biochem. Mol. Biol.">
        <title>Fundamental studies of adrenal retinoid-X-receptor: Protein isoform, tissue expression, subcellular distribution, and ligand availability.</title>
        <authorList>
            <person name="Cheng B."/>
            <person name="Al-Shammari F.H."/>
            <person name="Ghader I.A."/>
            <person name="Sequeira F."/>
            <person name="Thakkar J."/>
            <person name="Mathew T.C."/>
        </authorList>
    </citation>
    <scope>SUBCELLULAR LOCATION</scope>
    <scope>TISSUE SPECIFICITY</scope>
</reference>
<evidence type="ECO:0000250" key="1"/>
<evidence type="ECO:0000250" key="2">
    <source>
        <dbReference type="UniProtKB" id="P28702"/>
    </source>
</evidence>
<evidence type="ECO:0000250" key="3">
    <source>
        <dbReference type="UniProtKB" id="P28704"/>
    </source>
</evidence>
<evidence type="ECO:0000255" key="4">
    <source>
        <dbReference type="PROSITE-ProRule" id="PRU00407"/>
    </source>
</evidence>
<evidence type="ECO:0000255" key="5">
    <source>
        <dbReference type="PROSITE-ProRule" id="PRU01189"/>
    </source>
</evidence>
<evidence type="ECO:0000256" key="6">
    <source>
        <dbReference type="SAM" id="MobiDB-lite"/>
    </source>
</evidence>
<evidence type="ECO:0000269" key="7">
    <source>
    </source>
</evidence>
<evidence type="ECO:0000269" key="8">
    <source>
    </source>
</evidence>
<evidence type="ECO:0000305" key="9"/>
<name>RXRB_RAT</name>